<dbReference type="EMBL" id="CP000308">
    <property type="status" value="NOT_ANNOTATED_CDS"/>
    <property type="molecule type" value="Genomic_DNA"/>
</dbReference>
<dbReference type="RefSeq" id="WP_002231504.1">
    <property type="nucleotide sequence ID" value="NC_008150.1"/>
</dbReference>
<dbReference type="GeneID" id="96666390"/>
<dbReference type="Proteomes" id="UP000001971">
    <property type="component" value="Chromosome"/>
</dbReference>
<dbReference type="GO" id="GO:0009088">
    <property type="term" value="P:threonine biosynthetic process"/>
    <property type="evidence" value="ECO:0007669"/>
    <property type="project" value="UniProtKB-UniRule"/>
</dbReference>
<dbReference type="GO" id="GO:0031556">
    <property type="term" value="P:transcriptional attenuation by ribosome"/>
    <property type="evidence" value="ECO:0007669"/>
    <property type="project" value="UniProtKB-UniRule"/>
</dbReference>
<dbReference type="HAMAP" id="MF_01907">
    <property type="entry name" value="Leader_Thr"/>
    <property type="match status" value="1"/>
</dbReference>
<dbReference type="InterPro" id="IPR011720">
    <property type="entry name" value="Thr_lead_pept"/>
</dbReference>
<dbReference type="NCBIfam" id="TIGR02077">
    <property type="entry name" value="thr_lead_pep"/>
    <property type="match status" value="1"/>
</dbReference>
<dbReference type="Pfam" id="PF08254">
    <property type="entry name" value="Leader_Thr"/>
    <property type="match status" value="1"/>
</dbReference>
<keyword id="KW-0028">Amino-acid biosynthesis</keyword>
<keyword id="KW-0428">Leader peptide</keyword>
<keyword id="KW-0791">Threonine biosynthesis</keyword>
<protein>
    <recommendedName>
        <fullName evidence="1">thr operon leader peptide</fullName>
    </recommendedName>
    <alternativeName>
        <fullName evidence="1">thr operon attenuator</fullName>
    </alternativeName>
</protein>
<reference key="1">
    <citation type="journal article" date="2006" name="J. Bacteriol.">
        <title>Complete genome sequence of Yersinia pestis strains Antiqua and Nepal516: evidence of gene reduction in an emerging pathogen.</title>
        <authorList>
            <person name="Chain P.S.G."/>
            <person name="Hu P."/>
            <person name="Malfatti S.A."/>
            <person name="Radnedge L."/>
            <person name="Larimer F."/>
            <person name="Vergez L.M."/>
            <person name="Worsham P."/>
            <person name="Chu M.C."/>
            <person name="Andersen G.L."/>
        </authorList>
    </citation>
    <scope>NUCLEOTIDE SEQUENCE [LARGE SCALE GENOMIC DNA]</scope>
    <source>
        <strain>Antiqua</strain>
    </source>
</reference>
<gene>
    <name evidence="1" type="primary">thrL</name>
    <name type="ordered locus">YPA_4050.1</name>
</gene>
<sequence>MRYISLNTTIITTTETTGYGAG</sequence>
<accession>P0C5Z5</accession>
<proteinExistence type="inferred from homology"/>
<name>LPT_YERPA</name>
<organism>
    <name type="scientific">Yersinia pestis bv. Antiqua (strain Antiqua)</name>
    <dbReference type="NCBI Taxonomy" id="360102"/>
    <lineage>
        <taxon>Bacteria</taxon>
        <taxon>Pseudomonadati</taxon>
        <taxon>Pseudomonadota</taxon>
        <taxon>Gammaproteobacteria</taxon>
        <taxon>Enterobacterales</taxon>
        <taxon>Yersiniaceae</taxon>
        <taxon>Yersinia</taxon>
    </lineage>
</organism>
<evidence type="ECO:0000255" key="1">
    <source>
        <dbReference type="HAMAP-Rule" id="MF_01907"/>
    </source>
</evidence>
<comment type="function">
    <text evidence="1">This protein is involved in control of the biosynthesis of threonine.</text>
</comment>
<comment type="similarity">
    <text evidence="1">Belongs to the thr operon leader peptide family.</text>
</comment>
<feature type="peptide" id="PRO_0000312898" description="thr operon leader peptide">
    <location>
        <begin position="1"/>
        <end position="22"/>
    </location>
</feature>